<proteinExistence type="evidence at transcript level"/>
<accession>O97556</accession>
<name>GDIB_CANLF</name>
<comment type="function">
    <text evidence="2">GDP-dissociation inhibitor preventing the GDP to GTP exchange of most Rab proteins. By keeping these small GTPases in their inactive GDP-bound form regulates intracellular membrane trafficking. Negatively regulates protein transport to the cilium and ciliogenesis through the inhibition of RAB8A.</text>
</comment>
<comment type="subunit">
    <text evidence="2">Interacts with RHOH. Interacts with the GDP-bound inactive forms of RAB3A, RAB3B, RAB3C, RAB5A, RAB5B, RAB5C, RAB8A, RAB8B, RAB10, RAB12, RAB35, and RAB43; binds RAB3D to a lesser extent. Interacts with DZIP1; this interaction negatively regulates the interaction of GDI2 with GDP-bound RAB8A.</text>
</comment>
<comment type="subcellular location">
    <subcellularLocation>
        <location evidence="1">Cytoplasm</location>
    </subcellularLocation>
    <subcellularLocation>
        <location evidence="1">Membrane</location>
        <topology evidence="1">Peripheral membrane protein</topology>
    </subcellularLocation>
    <subcellularLocation>
        <location evidence="2">Golgi apparatus</location>
        <location evidence="2">trans-Golgi network</location>
    </subcellularLocation>
</comment>
<comment type="similarity">
    <text evidence="5">Belongs to the Rab GDI family.</text>
</comment>
<protein>
    <recommendedName>
        <fullName>Rab GDP dissociation inhibitor beta</fullName>
        <shortName>Rab GDI beta</shortName>
    </recommendedName>
    <alternativeName>
        <fullName>Guanosine diphosphate dissociation inhibitor 2</fullName>
        <shortName>GDI-2</shortName>
    </alternativeName>
</protein>
<reference key="1">
    <citation type="journal article" date="1998" name="Mol. Biol. Cell">
        <title>Rab11 is required for trans-Golgi network-to-plasma membrane transport and a preferential target for GDP dissociation inhibitor.</title>
        <authorList>
            <person name="Chen W."/>
            <person name="Feng Y."/>
            <person name="Chen D."/>
            <person name="Wandinger-Ness A."/>
        </authorList>
    </citation>
    <scope>NUCLEOTIDE SEQUENCE [MRNA]</scope>
    <source>
        <strain>Cocker spaniel</strain>
        <tissue>Kidney</tissue>
    </source>
</reference>
<dbReference type="EMBL" id="AF027361">
    <property type="protein sequence ID" value="AAD04247.1"/>
    <property type="molecule type" value="mRNA"/>
</dbReference>
<dbReference type="RefSeq" id="NP_001003184.1">
    <property type="nucleotide sequence ID" value="NM_001003184.1"/>
</dbReference>
<dbReference type="SMR" id="O97556"/>
<dbReference type="FunCoup" id="O97556">
    <property type="interactions" value="2225"/>
</dbReference>
<dbReference type="STRING" id="9615.ENSCAFP00000007805"/>
<dbReference type="SwissPalm" id="O97556"/>
<dbReference type="PaxDb" id="9612-ENSCAFP00000007805"/>
<dbReference type="GeneID" id="403818"/>
<dbReference type="KEGG" id="cfa:403818"/>
<dbReference type="CTD" id="2665"/>
<dbReference type="eggNOG" id="KOG1439">
    <property type="taxonomic scope" value="Eukaryota"/>
</dbReference>
<dbReference type="InParanoid" id="O97556"/>
<dbReference type="OrthoDB" id="9446342at2759"/>
<dbReference type="Proteomes" id="UP000002254">
    <property type="component" value="Unplaced"/>
</dbReference>
<dbReference type="Proteomes" id="UP000694429">
    <property type="component" value="Unplaced"/>
</dbReference>
<dbReference type="Proteomes" id="UP000694542">
    <property type="component" value="Unplaced"/>
</dbReference>
<dbReference type="Proteomes" id="UP000805418">
    <property type="component" value="Unplaced"/>
</dbReference>
<dbReference type="GO" id="GO:0005829">
    <property type="term" value="C:cytosol"/>
    <property type="evidence" value="ECO:0000318"/>
    <property type="project" value="GO_Central"/>
</dbReference>
<dbReference type="GO" id="GO:0005794">
    <property type="term" value="C:Golgi apparatus"/>
    <property type="evidence" value="ECO:0007669"/>
    <property type="project" value="UniProtKB-SubCell"/>
</dbReference>
<dbReference type="GO" id="GO:0016020">
    <property type="term" value="C:membrane"/>
    <property type="evidence" value="ECO:0007669"/>
    <property type="project" value="UniProtKB-SubCell"/>
</dbReference>
<dbReference type="GO" id="GO:0005096">
    <property type="term" value="F:GTPase activator activity"/>
    <property type="evidence" value="ECO:0007669"/>
    <property type="project" value="UniProtKB-KW"/>
</dbReference>
<dbReference type="GO" id="GO:0005093">
    <property type="term" value="F:Rab GDP-dissociation inhibitor activity"/>
    <property type="evidence" value="ECO:0000318"/>
    <property type="project" value="GO_Central"/>
</dbReference>
<dbReference type="GO" id="GO:1902018">
    <property type="term" value="P:negative regulation of cilium assembly"/>
    <property type="evidence" value="ECO:0000250"/>
    <property type="project" value="UniProtKB"/>
</dbReference>
<dbReference type="GO" id="GO:1903565">
    <property type="term" value="P:negative regulation of protein localization to cilium"/>
    <property type="evidence" value="ECO:0000250"/>
    <property type="project" value="UniProtKB"/>
</dbReference>
<dbReference type="GO" id="GO:0015031">
    <property type="term" value="P:protein transport"/>
    <property type="evidence" value="ECO:0007669"/>
    <property type="project" value="InterPro"/>
</dbReference>
<dbReference type="GO" id="GO:0007264">
    <property type="term" value="P:small GTPase-mediated signal transduction"/>
    <property type="evidence" value="ECO:0007669"/>
    <property type="project" value="InterPro"/>
</dbReference>
<dbReference type="GO" id="GO:0016192">
    <property type="term" value="P:vesicle-mediated transport"/>
    <property type="evidence" value="ECO:0000318"/>
    <property type="project" value="GO_Central"/>
</dbReference>
<dbReference type="FunFam" id="1.10.405.10:FF:000001">
    <property type="entry name" value="Rab GDP dissociation inhibitor"/>
    <property type="match status" value="1"/>
</dbReference>
<dbReference type="FunFam" id="3.30.519.10:FF:000005">
    <property type="entry name" value="Rab GDP dissociation inhibitor"/>
    <property type="match status" value="1"/>
</dbReference>
<dbReference type="FunFam" id="3.30.519.10:FF:000014">
    <property type="entry name" value="Rab GDP dissociation inhibitor"/>
    <property type="match status" value="1"/>
</dbReference>
<dbReference type="FunFam" id="3.50.50.60:FF:000158">
    <property type="entry name" value="Rab GDP dissociation inhibitor"/>
    <property type="match status" value="1"/>
</dbReference>
<dbReference type="FunFam" id="3.50.50.60:FF:000232">
    <property type="entry name" value="Rab GDP dissociation inhibitor"/>
    <property type="match status" value="1"/>
</dbReference>
<dbReference type="Gene3D" id="3.50.50.60">
    <property type="entry name" value="FAD/NAD(P)-binding domain"/>
    <property type="match status" value="1"/>
</dbReference>
<dbReference type="Gene3D" id="1.10.405.10">
    <property type="entry name" value="Guanine Nucleotide Dissociation Inhibitor, domain 1"/>
    <property type="match status" value="1"/>
</dbReference>
<dbReference type="Gene3D" id="3.30.519.10">
    <property type="entry name" value="Guanine Nucleotide Dissociation Inhibitor, domain 2"/>
    <property type="match status" value="1"/>
</dbReference>
<dbReference type="InterPro" id="IPR036188">
    <property type="entry name" value="FAD/NAD-bd_sf"/>
</dbReference>
<dbReference type="InterPro" id="IPR018203">
    <property type="entry name" value="GDP_dissociation_inhibitor"/>
</dbReference>
<dbReference type="InterPro" id="IPR000806">
    <property type="entry name" value="RabGDI"/>
</dbReference>
<dbReference type="PANTHER" id="PTHR11787:SF1">
    <property type="entry name" value="RAB GDP DISSOCIATION INHIBITOR BETA"/>
    <property type="match status" value="1"/>
</dbReference>
<dbReference type="PANTHER" id="PTHR11787">
    <property type="entry name" value="RAB GDP-DISSOCIATION INHIBITOR"/>
    <property type="match status" value="1"/>
</dbReference>
<dbReference type="Pfam" id="PF00996">
    <property type="entry name" value="GDI"/>
    <property type="match status" value="1"/>
</dbReference>
<dbReference type="PRINTS" id="PR00892">
    <property type="entry name" value="RABGDI"/>
</dbReference>
<dbReference type="PRINTS" id="PR00891">
    <property type="entry name" value="RABGDIREP"/>
</dbReference>
<dbReference type="SUPFAM" id="SSF51905">
    <property type="entry name" value="FAD/NAD(P)-binding domain"/>
    <property type="match status" value="2"/>
</dbReference>
<keyword id="KW-0007">Acetylation</keyword>
<keyword id="KW-0963">Cytoplasm</keyword>
<keyword id="KW-0333">Golgi apparatus</keyword>
<keyword id="KW-0343">GTPase activation</keyword>
<keyword id="KW-0472">Membrane</keyword>
<keyword id="KW-0597">Phosphoprotein</keyword>
<keyword id="KW-1185">Reference proteome</keyword>
<evidence type="ECO:0000250" key="1"/>
<evidence type="ECO:0000250" key="2">
    <source>
        <dbReference type="UniProtKB" id="P50395"/>
    </source>
</evidence>
<evidence type="ECO:0000250" key="3">
    <source>
        <dbReference type="UniProtKB" id="P50399"/>
    </source>
</evidence>
<evidence type="ECO:0000250" key="4">
    <source>
        <dbReference type="UniProtKB" id="Q61598"/>
    </source>
</evidence>
<evidence type="ECO:0000305" key="5"/>
<feature type="chain" id="PRO_0000056678" description="Rab GDP dissociation inhibitor beta">
    <location>
        <begin position="1"/>
        <end position="445"/>
    </location>
</feature>
<feature type="modified residue" description="N-acetylmethionine" evidence="2">
    <location>
        <position position="1"/>
    </location>
</feature>
<feature type="modified residue" description="N6-succinyllysine" evidence="4">
    <location>
        <position position="57"/>
    </location>
</feature>
<feature type="modified residue" description="N6-acetyllysine" evidence="2">
    <location>
        <position position="112"/>
    </location>
</feature>
<feature type="modified residue" description="Phosphoserine" evidence="3">
    <location>
        <position position="130"/>
    </location>
</feature>
<feature type="modified residue" description="N6-acetyllysine" evidence="2">
    <location>
        <position position="269"/>
    </location>
</feature>
<feature type="modified residue" description="Phosphoserine" evidence="2">
    <location>
        <position position="382"/>
    </location>
</feature>
<sequence length="445" mass="50322">MNEEYDVIVLGTGLTECILSGIMTVNGKKVLHMDRNPYYGGESASITPLEDLYKRFKIPGAPPASMGRGRDWNLDLIPKFLMANGQLVKMLLYTEVTRYLDFKVTEGSFVYKGGKIYKVPSTEAEALASSLMGLFEKRRFRKFLVYVANFDEKDPRTFEGIDPKKTAIGEVYKKFDLGQDVIDFTGHALALYRTDDYLDQPCCETINRIKLYSESLARYGKSPYLYPLYGLGELPQGFARLSAIYGGTYMLNKPIEEIIVQNGKVIGVKSEGEVARCKQLICDPSYVKDRVEKVGQVIRVICILSHPIKNTNDANSCQIIIPQNQVNRKSDIYVCMISSAHNVAAQGKYIAIVSTTAETKEPEKEIRPALELLEPIEQKFVSISDLLVPKDLGTESQIFISRTYDATTHFETTCDDIKNIYKRMTGSEFDFEEMKRKKNDIYGED</sequence>
<organism>
    <name type="scientific">Canis lupus familiaris</name>
    <name type="common">Dog</name>
    <name type="synonym">Canis familiaris</name>
    <dbReference type="NCBI Taxonomy" id="9615"/>
    <lineage>
        <taxon>Eukaryota</taxon>
        <taxon>Metazoa</taxon>
        <taxon>Chordata</taxon>
        <taxon>Craniata</taxon>
        <taxon>Vertebrata</taxon>
        <taxon>Euteleostomi</taxon>
        <taxon>Mammalia</taxon>
        <taxon>Eutheria</taxon>
        <taxon>Laurasiatheria</taxon>
        <taxon>Carnivora</taxon>
        <taxon>Caniformia</taxon>
        <taxon>Canidae</taxon>
        <taxon>Canis</taxon>
    </lineage>
</organism>
<gene>
    <name type="primary">GDI2</name>
</gene>